<name>ANPB_PSEAM</name>
<accession>Q99013</accession>
<organism>
    <name type="scientific">Pseudopleuronectes americanus</name>
    <name type="common">Winter flounder</name>
    <name type="synonym">Pleuronectes americanus</name>
    <dbReference type="NCBI Taxonomy" id="8265"/>
    <lineage>
        <taxon>Eukaryota</taxon>
        <taxon>Metazoa</taxon>
        <taxon>Chordata</taxon>
        <taxon>Craniata</taxon>
        <taxon>Vertebrata</taxon>
        <taxon>Euteleostomi</taxon>
        <taxon>Actinopterygii</taxon>
        <taxon>Neopterygii</taxon>
        <taxon>Teleostei</taxon>
        <taxon>Neoteleostei</taxon>
        <taxon>Acanthomorphata</taxon>
        <taxon>Carangaria</taxon>
        <taxon>Pleuronectiformes</taxon>
        <taxon>Pleuronectoidei</taxon>
        <taxon>Pleuronectidae</taxon>
        <taxon>Pseudopleuronectes</taxon>
    </lineage>
</organism>
<proteinExistence type="evidence at protein level"/>
<keyword id="KW-0027">Amidation</keyword>
<keyword id="KW-0047">Antifreeze protein</keyword>
<keyword id="KW-0903">Direct protein sequencing</keyword>
<keyword id="KW-0677">Repeat</keyword>
<keyword id="KW-0964">Secreted</keyword>
<keyword id="KW-0732">Signal</keyword>
<protein>
    <recommendedName>
        <fullName>Ice-structuring protein B</fullName>
        <shortName>ISP B</shortName>
    </recommendedName>
    <alternativeName>
        <fullName>Antifreeze protein B</fullName>
    </alternativeName>
    <alternativeName>
        <fullName>HPLC8</fullName>
    </alternativeName>
</protein>
<reference evidence="6" key="1">
    <citation type="journal article" date="1992" name="Gene">
        <title>Conservation of antifreeze protein-encoding genes in tandem repeats.</title>
        <authorList>
            <person name="Davies P.L."/>
        </authorList>
    </citation>
    <scope>NUCLEOTIDE SEQUENCE [GENOMIC DNA]</scope>
    <source>
        <tissue evidence="3">Testis</tissue>
    </source>
</reference>
<reference evidence="5" key="2">
    <citation type="journal article" date="1986" name="Eur. J. Biochem.">
        <title>Biosynthesis of antifreeze polypeptides in the winter flounder. Characterization and seasonal occurrence of precursor polypeptides.</title>
        <authorList>
            <person name="Hew C.-L."/>
            <person name="Wang N.-C."/>
            <person name="Yan S."/>
            <person name="Cai H."/>
            <person name="Sclater A."/>
            <person name="Fletcher G.L."/>
        </authorList>
    </citation>
    <scope>PROTEIN SEQUENCE OF 24-28</scope>
    <scope>FUNCTION</scope>
    <scope>INDUCTION</scope>
    <scope>TISSUE SPECIFICITY</scope>
    <scope>AMIDATION</scope>
    <source>
        <tissue evidence="4">Liver</tissue>
    </source>
</reference>
<sequence>MALSLFTVGQLIFLFWTMRITEARPDPAAKAAPAAAAVPAAAAPDTASDAAAAAALTAANAAAAAKLTADNAAAAAAATARG</sequence>
<feature type="signal peptide" evidence="4">
    <location>
        <begin position="1"/>
        <end position="23"/>
    </location>
</feature>
<feature type="propeptide" id="PRO_0000225596" description="Removed by a dipeptidylpeptidase" evidence="4">
    <location>
        <begin position="24"/>
        <end position="44"/>
    </location>
</feature>
<feature type="chain" id="PRO_0000225597" description="Ice-structuring protein B" evidence="4">
    <location>
        <begin position="45"/>
        <end position="81"/>
    </location>
</feature>
<feature type="modified residue" description="Arginine amide" evidence="1">
    <location>
        <position position="81"/>
    </location>
</feature>
<comment type="function">
    <text evidence="4">Contributes to protect fish blood from freezing at subzero sea water temperatures. Lowers the blood freezing point. Binds to nascent ice crystals and prevents further growth.</text>
</comment>
<comment type="subcellular location">
    <subcellularLocation>
        <location>Secreted</location>
        <location>Extracellular space</location>
    </subcellularLocation>
</comment>
<comment type="tissue specificity">
    <text evidence="4">Detected in liver (at protein level).</text>
</comment>
<comment type="induction">
    <text evidence="4">By winter conditions, at least in part by water temperatures of below 8 degrees Celsius.</text>
</comment>
<comment type="PTM">
    <text evidence="4">Amidated.</text>
</comment>
<comment type="similarity">
    <text evidence="2">Belongs to the type-I AFP family.</text>
</comment>
<evidence type="ECO:0000250" key="1"/>
<evidence type="ECO:0000255" key="2"/>
<evidence type="ECO:0000269" key="3">
    <source>
    </source>
</evidence>
<evidence type="ECO:0000269" key="4">
    <source>
    </source>
</evidence>
<evidence type="ECO:0000305" key="5"/>
<evidence type="ECO:0000312" key="6">
    <source>
        <dbReference type="EMBL" id="AAA49468.1"/>
    </source>
</evidence>
<dbReference type="EMBL" id="M62413">
    <property type="protein sequence ID" value="AAA49468.1"/>
    <property type="molecule type" value="Genomic_DNA"/>
</dbReference>
<dbReference type="PIR" id="JS0705">
    <property type="entry name" value="JS0705"/>
</dbReference>
<dbReference type="SMR" id="Q99013"/>
<dbReference type="GO" id="GO:0005615">
    <property type="term" value="C:extracellular space"/>
    <property type="evidence" value="ECO:0000314"/>
    <property type="project" value="UniProtKB"/>
</dbReference>
<dbReference type="GO" id="GO:0016172">
    <property type="term" value="F:antifreeze activity"/>
    <property type="evidence" value="ECO:0007669"/>
    <property type="project" value="InterPro"/>
</dbReference>
<dbReference type="GO" id="GO:0050825">
    <property type="term" value="F:ice binding"/>
    <property type="evidence" value="ECO:0000304"/>
    <property type="project" value="UniProtKB"/>
</dbReference>
<dbReference type="GO" id="GO:0042309">
    <property type="term" value="P:homoiothermy"/>
    <property type="evidence" value="ECO:0000270"/>
    <property type="project" value="UniProtKB"/>
</dbReference>
<dbReference type="GO" id="GO:0050826">
    <property type="term" value="P:response to freezing"/>
    <property type="evidence" value="ECO:0000270"/>
    <property type="project" value="UniProtKB"/>
</dbReference>
<dbReference type="InterPro" id="IPR000104">
    <property type="entry name" value="Antifreeze_1"/>
</dbReference>
<dbReference type="PRINTS" id="PR00308">
    <property type="entry name" value="ANTIFREEZEI"/>
</dbReference>